<feature type="chain" id="PRO_0000181969" description="Transcription termination/antitermination protein NusA">
    <location>
        <begin position="1"/>
        <end position="395"/>
    </location>
</feature>
<feature type="domain" description="S1 motif" evidence="1">
    <location>
        <begin position="137"/>
        <end position="201"/>
    </location>
</feature>
<feature type="domain" description="KH 1" evidence="1">
    <location>
        <begin position="243"/>
        <end position="291"/>
    </location>
</feature>
<feature type="domain" description="KH 2" evidence="1">
    <location>
        <begin position="331"/>
        <end position="378"/>
    </location>
</feature>
<gene>
    <name evidence="1" type="primary">nusA</name>
    <name type="ordered locus">HP_1514</name>
</gene>
<accession>P55977</accession>
<organism>
    <name type="scientific">Helicobacter pylori (strain ATCC 700392 / 26695)</name>
    <name type="common">Campylobacter pylori</name>
    <dbReference type="NCBI Taxonomy" id="85962"/>
    <lineage>
        <taxon>Bacteria</taxon>
        <taxon>Pseudomonadati</taxon>
        <taxon>Campylobacterota</taxon>
        <taxon>Epsilonproteobacteria</taxon>
        <taxon>Campylobacterales</taxon>
        <taxon>Helicobacteraceae</taxon>
        <taxon>Helicobacter</taxon>
    </lineage>
</organism>
<name>NUSA_HELPY</name>
<reference key="1">
    <citation type="journal article" date="1997" name="Nature">
        <title>The complete genome sequence of the gastric pathogen Helicobacter pylori.</title>
        <authorList>
            <person name="Tomb J.-F."/>
            <person name="White O."/>
            <person name="Kerlavage A.R."/>
            <person name="Clayton R.A."/>
            <person name="Sutton G.G."/>
            <person name="Fleischmann R.D."/>
            <person name="Ketchum K.A."/>
            <person name="Klenk H.-P."/>
            <person name="Gill S.R."/>
            <person name="Dougherty B.A."/>
            <person name="Nelson K.E."/>
            <person name="Quackenbush J."/>
            <person name="Zhou L."/>
            <person name="Kirkness E.F."/>
            <person name="Peterson S.N."/>
            <person name="Loftus B.J."/>
            <person name="Richardson D.L."/>
            <person name="Dodson R.J."/>
            <person name="Khalak H.G."/>
            <person name="Glodek A."/>
            <person name="McKenney K."/>
            <person name="FitzGerald L.M."/>
            <person name="Lee N."/>
            <person name="Adams M.D."/>
            <person name="Hickey E.K."/>
            <person name="Berg D.E."/>
            <person name="Gocayne J.D."/>
            <person name="Utterback T.R."/>
            <person name="Peterson J.D."/>
            <person name="Kelley J.M."/>
            <person name="Cotton M.D."/>
            <person name="Weidman J.F."/>
            <person name="Fujii C."/>
            <person name="Bowman C."/>
            <person name="Watthey L."/>
            <person name="Wallin E."/>
            <person name="Hayes W.S."/>
            <person name="Borodovsky M."/>
            <person name="Karp P.D."/>
            <person name="Smith H.O."/>
            <person name="Fraser C.M."/>
            <person name="Venter J.C."/>
        </authorList>
    </citation>
    <scope>NUCLEOTIDE SEQUENCE [LARGE SCALE GENOMIC DNA]</scope>
    <source>
        <strain>ATCC 700392 / 26695</strain>
    </source>
</reference>
<protein>
    <recommendedName>
        <fullName evidence="1">Transcription termination/antitermination protein NusA</fullName>
    </recommendedName>
</protein>
<keyword id="KW-0963">Cytoplasm</keyword>
<keyword id="KW-1185">Reference proteome</keyword>
<keyword id="KW-0677">Repeat</keyword>
<keyword id="KW-0694">RNA-binding</keyword>
<keyword id="KW-0804">Transcription</keyword>
<keyword id="KW-0889">Transcription antitermination</keyword>
<keyword id="KW-0805">Transcription regulation</keyword>
<keyword id="KW-0806">Transcription termination</keyword>
<sequence>MEKISDLIECIAYEKNLPKEMISKVIQGCLLKMAQNELDPLARYLVVEENKQLQLIQLVEVLEDGDERLVNDPSKYISLSKAKEMDPSVKIKDELSYSLSLESMKQGAINRLFKDLQYQLEKALEDSHFEAFQKRLNSVLMGQVILVDHNQNTFIEIEQQFQGVLSMRHRIKGESFKVGDSIKAVLTQVKRTKKGLLLELSRTTPKMLEALLELEVPEIKDKEIEIIHCARIPGNRAKVSFFSHNARIDPIGAAVGVKGVRINAISNELNKENIDCIEYSNVPEIYITLALAPAKILSVEIKKIPIEELNAEEKESIQERFIVNNHLQKAKVRLLDIEKSKAIGKGGVNVCLASMLTGYHIEFETIPSVKENAENESEKETPKVGVEALESLFKN</sequence>
<evidence type="ECO:0000255" key="1">
    <source>
        <dbReference type="HAMAP-Rule" id="MF_00945"/>
    </source>
</evidence>
<proteinExistence type="inferred from homology"/>
<dbReference type="EMBL" id="AE000511">
    <property type="protein sequence ID" value="AAD08555.1"/>
    <property type="molecule type" value="Genomic_DNA"/>
</dbReference>
<dbReference type="PIR" id="B64709">
    <property type="entry name" value="B64709"/>
</dbReference>
<dbReference type="RefSeq" id="NP_208305.1">
    <property type="nucleotide sequence ID" value="NC_000915.1"/>
</dbReference>
<dbReference type="RefSeq" id="WP_000411646.1">
    <property type="nucleotide sequence ID" value="NC_018939.1"/>
</dbReference>
<dbReference type="SMR" id="P55977"/>
<dbReference type="DIP" id="DIP-3664N"/>
<dbReference type="FunCoup" id="P55977">
    <property type="interactions" value="320"/>
</dbReference>
<dbReference type="IntAct" id="P55977">
    <property type="interactions" value="8"/>
</dbReference>
<dbReference type="MINT" id="P55977"/>
<dbReference type="STRING" id="85962.HP_1514"/>
<dbReference type="PaxDb" id="85962-C694_07845"/>
<dbReference type="EnsemblBacteria" id="AAD08555">
    <property type="protein sequence ID" value="AAD08555"/>
    <property type="gene ID" value="HP_1514"/>
</dbReference>
<dbReference type="KEGG" id="heo:C694_07845"/>
<dbReference type="KEGG" id="hpy:HP_1514"/>
<dbReference type="PATRIC" id="fig|85962.47.peg.1628"/>
<dbReference type="eggNOG" id="COG0195">
    <property type="taxonomic scope" value="Bacteria"/>
</dbReference>
<dbReference type="InParanoid" id="P55977"/>
<dbReference type="OrthoDB" id="9807233at2"/>
<dbReference type="PhylomeDB" id="P55977"/>
<dbReference type="Proteomes" id="UP000000429">
    <property type="component" value="Chromosome"/>
</dbReference>
<dbReference type="GO" id="GO:0005829">
    <property type="term" value="C:cytosol"/>
    <property type="evidence" value="ECO:0000318"/>
    <property type="project" value="GO_Central"/>
</dbReference>
<dbReference type="GO" id="GO:0003700">
    <property type="term" value="F:DNA-binding transcription factor activity"/>
    <property type="evidence" value="ECO:0007669"/>
    <property type="project" value="InterPro"/>
</dbReference>
<dbReference type="GO" id="GO:0003723">
    <property type="term" value="F:RNA binding"/>
    <property type="evidence" value="ECO:0007669"/>
    <property type="project" value="UniProtKB-UniRule"/>
</dbReference>
<dbReference type="GO" id="GO:0006353">
    <property type="term" value="P:DNA-templated transcription termination"/>
    <property type="evidence" value="ECO:0007669"/>
    <property type="project" value="UniProtKB-UniRule"/>
</dbReference>
<dbReference type="GO" id="GO:0031564">
    <property type="term" value="P:transcription antitermination"/>
    <property type="evidence" value="ECO:0000318"/>
    <property type="project" value="GO_Central"/>
</dbReference>
<dbReference type="CDD" id="cd02134">
    <property type="entry name" value="KH-II_NusA_rpt1"/>
    <property type="match status" value="1"/>
</dbReference>
<dbReference type="CDD" id="cd22529">
    <property type="entry name" value="KH-II_NusA_rpt2"/>
    <property type="match status" value="1"/>
</dbReference>
<dbReference type="FunFam" id="3.30.300.20:FF:000002">
    <property type="entry name" value="Transcription termination/antitermination protein NusA"/>
    <property type="match status" value="1"/>
</dbReference>
<dbReference type="Gene3D" id="3.30.300.20">
    <property type="match status" value="2"/>
</dbReference>
<dbReference type="Gene3D" id="2.40.50.140">
    <property type="entry name" value="Nucleic acid-binding proteins"/>
    <property type="match status" value="1"/>
</dbReference>
<dbReference type="Gene3D" id="3.30.1480.10">
    <property type="entry name" value="NusA, N-terminal domain"/>
    <property type="match status" value="1"/>
</dbReference>
<dbReference type="HAMAP" id="MF_00945_B">
    <property type="entry name" value="NusA_B"/>
    <property type="match status" value="1"/>
</dbReference>
<dbReference type="InterPro" id="IPR015946">
    <property type="entry name" value="KH_dom-like_a/b"/>
</dbReference>
<dbReference type="InterPro" id="IPR025249">
    <property type="entry name" value="KH_dom_NusA-like"/>
</dbReference>
<dbReference type="InterPro" id="IPR009019">
    <property type="entry name" value="KH_sf_prok-type"/>
</dbReference>
<dbReference type="InterPro" id="IPR012340">
    <property type="entry name" value="NA-bd_OB-fold"/>
</dbReference>
<dbReference type="InterPro" id="IPR030842">
    <property type="entry name" value="NusA_bac"/>
</dbReference>
<dbReference type="InterPro" id="IPR036555">
    <property type="entry name" value="NusA_N_sf"/>
</dbReference>
<dbReference type="InterPro" id="IPR003029">
    <property type="entry name" value="S1_domain"/>
</dbReference>
<dbReference type="InterPro" id="IPR013735">
    <property type="entry name" value="TF_NusA_N"/>
</dbReference>
<dbReference type="InterPro" id="IPR010213">
    <property type="entry name" value="Tscrpt_termination_fac_NusA"/>
</dbReference>
<dbReference type="NCBIfam" id="TIGR01953">
    <property type="entry name" value="NusA"/>
    <property type="match status" value="1"/>
</dbReference>
<dbReference type="PANTHER" id="PTHR22648">
    <property type="entry name" value="TRANSCRIPTION TERMINATION FACTOR NUSA"/>
    <property type="match status" value="1"/>
</dbReference>
<dbReference type="PANTHER" id="PTHR22648:SF0">
    <property type="entry name" value="TRANSCRIPTION TERMINATION_ANTITERMINATION PROTEIN NUSA"/>
    <property type="match status" value="1"/>
</dbReference>
<dbReference type="Pfam" id="PF13184">
    <property type="entry name" value="KH_5"/>
    <property type="match status" value="1"/>
</dbReference>
<dbReference type="Pfam" id="PF23095">
    <property type="entry name" value="KH_NusA_C"/>
    <property type="match status" value="1"/>
</dbReference>
<dbReference type="Pfam" id="PF08529">
    <property type="entry name" value="NusA_N"/>
    <property type="match status" value="1"/>
</dbReference>
<dbReference type="SMART" id="SM00316">
    <property type="entry name" value="S1"/>
    <property type="match status" value="1"/>
</dbReference>
<dbReference type="SUPFAM" id="SSF50249">
    <property type="entry name" value="Nucleic acid-binding proteins"/>
    <property type="match status" value="1"/>
</dbReference>
<dbReference type="SUPFAM" id="SSF54814">
    <property type="entry name" value="Prokaryotic type KH domain (KH-domain type II)"/>
    <property type="match status" value="1"/>
</dbReference>
<dbReference type="SUPFAM" id="SSF69705">
    <property type="entry name" value="Transcription factor NusA, N-terminal domain"/>
    <property type="match status" value="1"/>
</dbReference>
<dbReference type="PROSITE" id="PS50126">
    <property type="entry name" value="S1"/>
    <property type="match status" value="1"/>
</dbReference>
<comment type="function">
    <text evidence="1">Participates in both transcription termination and antitermination.</text>
</comment>
<comment type="subunit">
    <text evidence="1">Monomer. Binds directly to the core enzyme of the DNA-dependent RNA polymerase and to nascent RNA.</text>
</comment>
<comment type="subcellular location">
    <subcellularLocation>
        <location evidence="1">Cytoplasm</location>
    </subcellularLocation>
</comment>
<comment type="similarity">
    <text evidence="1">Belongs to the NusA family.</text>
</comment>